<comment type="function">
    <text evidence="1">Part of the ABC transporter complex LolCDE involved in the translocation of mature outer membrane-directed lipoproteins, from the inner membrane to the periplasmic chaperone, LolA. Responsible for the formation of the LolA-lipoprotein complex in an ATP-dependent manner.</text>
</comment>
<comment type="subunit">
    <text evidence="1">The complex is composed of two ATP-binding proteins (LolD) and two transmembrane proteins (LolC and LolE).</text>
</comment>
<comment type="subcellular location">
    <subcellularLocation>
        <location evidence="1">Cell inner membrane</location>
        <topology evidence="1">Peripheral membrane protein</topology>
    </subcellularLocation>
</comment>
<comment type="similarity">
    <text evidence="1">Belongs to the ABC transporter superfamily. Lipoprotein translocase (TC 3.A.1.125) family.</text>
</comment>
<keyword id="KW-0067">ATP-binding</keyword>
<keyword id="KW-0997">Cell inner membrane</keyword>
<keyword id="KW-1003">Cell membrane</keyword>
<keyword id="KW-0472">Membrane</keyword>
<keyword id="KW-0547">Nucleotide-binding</keyword>
<keyword id="KW-1185">Reference proteome</keyword>
<keyword id="KW-1278">Translocase</keyword>
<keyword id="KW-0813">Transport</keyword>
<sequence>MQFVNSGISVTDLRKTFGNSEIIKGVTLDIEDGDYVSLTGKSGSGKSTLLYMISSLDPPSSGTIKIDKKDIYRMNEEEIHEFRNKRMGFIFQFHYLLPEFTAIENVLMPARKAGLLKEYQSYAEHLLEEFDLKDRMNYRINRLSGGQAQRVAIARALVMNPKYIFADEPTGALDSTNTKVVMNILEKVNRETKTTILVVTHDPDFASKTKRQIHLVDGRVVSLKEFEAIKKSVKTAR</sequence>
<protein>
    <recommendedName>
        <fullName evidence="1">Lipoprotein-releasing system ATP-binding protein LolD</fullName>
        <ecNumber evidence="1">7.6.2.-</ecNumber>
    </recommendedName>
</protein>
<accession>Q8F6L8</accession>
<evidence type="ECO:0000255" key="1">
    <source>
        <dbReference type="HAMAP-Rule" id="MF_01708"/>
    </source>
</evidence>
<name>LOLD_LEPIN</name>
<reference key="1">
    <citation type="journal article" date="2003" name="Nature">
        <title>Unique physiological and pathogenic features of Leptospira interrogans revealed by whole-genome sequencing.</title>
        <authorList>
            <person name="Ren S.-X."/>
            <person name="Fu G."/>
            <person name="Jiang X.-G."/>
            <person name="Zeng R."/>
            <person name="Miao Y.-G."/>
            <person name="Xu H."/>
            <person name="Zhang Y.-X."/>
            <person name="Xiong H."/>
            <person name="Lu G."/>
            <person name="Lu L.-F."/>
            <person name="Jiang H.-Q."/>
            <person name="Jia J."/>
            <person name="Tu Y.-F."/>
            <person name="Jiang J.-X."/>
            <person name="Gu W.-Y."/>
            <person name="Zhang Y.-Q."/>
            <person name="Cai Z."/>
            <person name="Sheng H.-H."/>
            <person name="Yin H.-F."/>
            <person name="Zhang Y."/>
            <person name="Zhu G.-F."/>
            <person name="Wan M."/>
            <person name="Huang H.-L."/>
            <person name="Qian Z."/>
            <person name="Wang S.-Y."/>
            <person name="Ma W."/>
            <person name="Yao Z.-J."/>
            <person name="Shen Y."/>
            <person name="Qiang B.-Q."/>
            <person name="Xia Q.-C."/>
            <person name="Guo X.-K."/>
            <person name="Danchin A."/>
            <person name="Saint Girons I."/>
            <person name="Somerville R.L."/>
            <person name="Wen Y.-M."/>
            <person name="Shi M.-H."/>
            <person name="Chen Z."/>
            <person name="Xu J.-G."/>
            <person name="Zhao G.-P."/>
        </authorList>
    </citation>
    <scope>NUCLEOTIDE SEQUENCE [LARGE SCALE GENOMIC DNA]</scope>
    <source>
        <strain>56601</strain>
    </source>
</reference>
<feature type="chain" id="PRO_0000092441" description="Lipoprotein-releasing system ATP-binding protein LolD">
    <location>
        <begin position="1"/>
        <end position="237"/>
    </location>
</feature>
<feature type="domain" description="ABC transporter" evidence="1">
    <location>
        <begin position="8"/>
        <end position="236"/>
    </location>
</feature>
<feature type="binding site" evidence="1">
    <location>
        <begin position="40"/>
        <end position="47"/>
    </location>
    <ligand>
        <name>ATP</name>
        <dbReference type="ChEBI" id="CHEBI:30616"/>
    </ligand>
</feature>
<proteinExistence type="inferred from homology"/>
<dbReference type="EC" id="7.6.2.-" evidence="1"/>
<dbReference type="EMBL" id="AE010300">
    <property type="protein sequence ID" value="AAN48484.2"/>
    <property type="molecule type" value="Genomic_DNA"/>
</dbReference>
<dbReference type="RefSeq" id="NP_711466.2">
    <property type="nucleotide sequence ID" value="NC_004342.2"/>
</dbReference>
<dbReference type="RefSeq" id="WP_001161020.1">
    <property type="nucleotide sequence ID" value="NC_004342.2"/>
</dbReference>
<dbReference type="SMR" id="Q8F6L8"/>
<dbReference type="STRING" id="189518.LA_1285"/>
<dbReference type="PaxDb" id="189518-LA_1285"/>
<dbReference type="EnsemblBacteria" id="AAN48484">
    <property type="protein sequence ID" value="AAN48484"/>
    <property type="gene ID" value="LA_1285"/>
</dbReference>
<dbReference type="KEGG" id="lil:LA_1285"/>
<dbReference type="PATRIC" id="fig|189518.3.peg.1285"/>
<dbReference type="HOGENOM" id="CLU_000604_1_22_12"/>
<dbReference type="InParanoid" id="Q8F6L8"/>
<dbReference type="OrthoDB" id="9805538at2"/>
<dbReference type="Proteomes" id="UP000001408">
    <property type="component" value="Chromosome I"/>
</dbReference>
<dbReference type="GO" id="GO:0005886">
    <property type="term" value="C:plasma membrane"/>
    <property type="evidence" value="ECO:0000318"/>
    <property type="project" value="GO_Central"/>
</dbReference>
<dbReference type="GO" id="GO:0005524">
    <property type="term" value="F:ATP binding"/>
    <property type="evidence" value="ECO:0007669"/>
    <property type="project" value="UniProtKB-KW"/>
</dbReference>
<dbReference type="GO" id="GO:0016887">
    <property type="term" value="F:ATP hydrolysis activity"/>
    <property type="evidence" value="ECO:0007669"/>
    <property type="project" value="InterPro"/>
</dbReference>
<dbReference type="GO" id="GO:0022857">
    <property type="term" value="F:transmembrane transporter activity"/>
    <property type="evidence" value="ECO:0000318"/>
    <property type="project" value="GO_Central"/>
</dbReference>
<dbReference type="GO" id="GO:0055085">
    <property type="term" value="P:transmembrane transport"/>
    <property type="evidence" value="ECO:0000318"/>
    <property type="project" value="GO_Central"/>
</dbReference>
<dbReference type="CDD" id="cd03255">
    <property type="entry name" value="ABC_MJ0796_LolCDE_FtsE"/>
    <property type="match status" value="1"/>
</dbReference>
<dbReference type="FunFam" id="3.40.50.300:FF:000230">
    <property type="entry name" value="Lipoprotein-releasing system ATP-binding protein LolD"/>
    <property type="match status" value="1"/>
</dbReference>
<dbReference type="Gene3D" id="3.40.50.300">
    <property type="entry name" value="P-loop containing nucleotide triphosphate hydrolases"/>
    <property type="match status" value="1"/>
</dbReference>
<dbReference type="InterPro" id="IPR003593">
    <property type="entry name" value="AAA+_ATPase"/>
</dbReference>
<dbReference type="InterPro" id="IPR003439">
    <property type="entry name" value="ABC_transporter-like_ATP-bd"/>
</dbReference>
<dbReference type="InterPro" id="IPR017871">
    <property type="entry name" value="ABC_transporter-like_CS"/>
</dbReference>
<dbReference type="InterPro" id="IPR017911">
    <property type="entry name" value="MacB-like_ATP-bd"/>
</dbReference>
<dbReference type="InterPro" id="IPR027417">
    <property type="entry name" value="P-loop_NTPase"/>
</dbReference>
<dbReference type="PANTHER" id="PTHR42798:SF7">
    <property type="entry name" value="ALPHA-D-RIBOSE 1-METHYLPHOSPHONATE 5-TRIPHOSPHATE SYNTHASE SUBUNIT PHNL"/>
    <property type="match status" value="1"/>
</dbReference>
<dbReference type="PANTHER" id="PTHR42798">
    <property type="entry name" value="LIPOPROTEIN-RELEASING SYSTEM ATP-BINDING PROTEIN LOLD"/>
    <property type="match status" value="1"/>
</dbReference>
<dbReference type="Pfam" id="PF00005">
    <property type="entry name" value="ABC_tran"/>
    <property type="match status" value="1"/>
</dbReference>
<dbReference type="SMART" id="SM00382">
    <property type="entry name" value="AAA"/>
    <property type="match status" value="1"/>
</dbReference>
<dbReference type="SUPFAM" id="SSF52540">
    <property type="entry name" value="P-loop containing nucleoside triphosphate hydrolases"/>
    <property type="match status" value="1"/>
</dbReference>
<dbReference type="PROSITE" id="PS00211">
    <property type="entry name" value="ABC_TRANSPORTER_1"/>
    <property type="match status" value="1"/>
</dbReference>
<dbReference type="PROSITE" id="PS50893">
    <property type="entry name" value="ABC_TRANSPORTER_2"/>
    <property type="match status" value="1"/>
</dbReference>
<dbReference type="PROSITE" id="PS51244">
    <property type="entry name" value="LOLD"/>
    <property type="match status" value="1"/>
</dbReference>
<organism>
    <name type="scientific">Leptospira interrogans serogroup Icterohaemorrhagiae serovar Lai (strain 56601)</name>
    <dbReference type="NCBI Taxonomy" id="189518"/>
    <lineage>
        <taxon>Bacteria</taxon>
        <taxon>Pseudomonadati</taxon>
        <taxon>Spirochaetota</taxon>
        <taxon>Spirochaetia</taxon>
        <taxon>Leptospirales</taxon>
        <taxon>Leptospiraceae</taxon>
        <taxon>Leptospira</taxon>
    </lineage>
</organism>
<gene>
    <name evidence="1" type="primary">lolD</name>
    <name type="ordered locus">LA_1285</name>
</gene>